<name>Y1218_NEIMB</name>
<feature type="chain" id="PRO_0000209302" description="UPF0250 protein NMB1218">
    <location>
        <begin position="1"/>
        <end position="91"/>
    </location>
</feature>
<accession>P67536</accession>
<accession>Q9JRI4</accession>
<protein>
    <recommendedName>
        <fullName evidence="1">UPF0250 protein NMB1218</fullName>
    </recommendedName>
</protein>
<sequence>MTEQKNKTSLIEFPCTFPLKVMGAVHPEFEQAVLDTVRLHAPDTQAHHITTRPSSKGNYTGATVQVKVENQEQLDNIYRALTSHELVKVVL</sequence>
<keyword id="KW-1185">Reference proteome</keyword>
<gene>
    <name type="ordered locus">NMB1218</name>
</gene>
<evidence type="ECO:0000255" key="1">
    <source>
        <dbReference type="HAMAP-Rule" id="MF_00659"/>
    </source>
</evidence>
<organism>
    <name type="scientific">Neisseria meningitidis serogroup B (strain ATCC BAA-335 / MC58)</name>
    <dbReference type="NCBI Taxonomy" id="122586"/>
    <lineage>
        <taxon>Bacteria</taxon>
        <taxon>Pseudomonadati</taxon>
        <taxon>Pseudomonadota</taxon>
        <taxon>Betaproteobacteria</taxon>
        <taxon>Neisseriales</taxon>
        <taxon>Neisseriaceae</taxon>
        <taxon>Neisseria</taxon>
    </lineage>
</organism>
<proteinExistence type="inferred from homology"/>
<reference key="1">
    <citation type="journal article" date="2000" name="Science">
        <title>Complete genome sequence of Neisseria meningitidis serogroup B strain MC58.</title>
        <authorList>
            <person name="Tettelin H."/>
            <person name="Saunders N.J."/>
            <person name="Heidelberg J.F."/>
            <person name="Jeffries A.C."/>
            <person name="Nelson K.E."/>
            <person name="Eisen J.A."/>
            <person name="Ketchum K.A."/>
            <person name="Hood D.W."/>
            <person name="Peden J.F."/>
            <person name="Dodson R.J."/>
            <person name="Nelson W.C."/>
            <person name="Gwinn M.L."/>
            <person name="DeBoy R.T."/>
            <person name="Peterson J.D."/>
            <person name="Hickey E.K."/>
            <person name="Haft D.H."/>
            <person name="Salzberg S.L."/>
            <person name="White O."/>
            <person name="Fleischmann R.D."/>
            <person name="Dougherty B.A."/>
            <person name="Mason T.M."/>
            <person name="Ciecko A."/>
            <person name="Parksey D.S."/>
            <person name="Blair E."/>
            <person name="Cittone H."/>
            <person name="Clark E.B."/>
            <person name="Cotton M.D."/>
            <person name="Utterback T.R."/>
            <person name="Khouri H.M."/>
            <person name="Qin H."/>
            <person name="Vamathevan J.J."/>
            <person name="Gill J."/>
            <person name="Scarlato V."/>
            <person name="Masignani V."/>
            <person name="Pizza M."/>
            <person name="Grandi G."/>
            <person name="Sun L."/>
            <person name="Smith H.O."/>
            <person name="Fraser C.M."/>
            <person name="Moxon E.R."/>
            <person name="Rappuoli R."/>
            <person name="Venter J.C."/>
        </authorList>
    </citation>
    <scope>NUCLEOTIDE SEQUENCE [LARGE SCALE GENOMIC DNA]</scope>
    <source>
        <strain>ATCC BAA-335 / MC58</strain>
    </source>
</reference>
<comment type="similarity">
    <text evidence="1">Belongs to the UPF0250 family.</text>
</comment>
<dbReference type="EMBL" id="AE002098">
    <property type="protein sequence ID" value="AAF41600.1"/>
    <property type="molecule type" value="Genomic_DNA"/>
</dbReference>
<dbReference type="PIR" id="F81109">
    <property type="entry name" value="F81109"/>
</dbReference>
<dbReference type="RefSeq" id="NP_274243.1">
    <property type="nucleotide sequence ID" value="NC_003112.2"/>
</dbReference>
<dbReference type="RefSeq" id="WP_002217171.1">
    <property type="nucleotide sequence ID" value="NC_003112.2"/>
</dbReference>
<dbReference type="SMR" id="P67536"/>
<dbReference type="FunCoup" id="P67536">
    <property type="interactions" value="143"/>
</dbReference>
<dbReference type="STRING" id="122586.NMB1218"/>
<dbReference type="PaxDb" id="122586-NMB1218"/>
<dbReference type="KEGG" id="nme:NMB1218"/>
<dbReference type="PATRIC" id="fig|122586.8.peg.1521"/>
<dbReference type="HOGENOM" id="CLU_161438_1_2_4"/>
<dbReference type="InParanoid" id="P67536"/>
<dbReference type="OrthoDB" id="9793424at2"/>
<dbReference type="Proteomes" id="UP000000425">
    <property type="component" value="Chromosome"/>
</dbReference>
<dbReference type="Gene3D" id="3.30.70.260">
    <property type="match status" value="1"/>
</dbReference>
<dbReference type="HAMAP" id="MF_00659">
    <property type="entry name" value="UPF0250"/>
    <property type="match status" value="1"/>
</dbReference>
<dbReference type="InterPro" id="IPR007454">
    <property type="entry name" value="UPF0250_YbeD-like"/>
</dbReference>
<dbReference type="InterPro" id="IPR027471">
    <property type="entry name" value="YbeD-like_sf"/>
</dbReference>
<dbReference type="PANTHER" id="PTHR38036">
    <property type="entry name" value="UPF0250 PROTEIN YBED"/>
    <property type="match status" value="1"/>
</dbReference>
<dbReference type="PANTHER" id="PTHR38036:SF1">
    <property type="entry name" value="UPF0250 PROTEIN YBED"/>
    <property type="match status" value="1"/>
</dbReference>
<dbReference type="Pfam" id="PF04359">
    <property type="entry name" value="DUF493"/>
    <property type="match status" value="1"/>
</dbReference>
<dbReference type="SUPFAM" id="SSF117991">
    <property type="entry name" value="YbeD/HP0495-like"/>
    <property type="match status" value="1"/>
</dbReference>